<comment type="catalytic activity">
    <reaction evidence="1">
        <text>D-erythro-1-(imidazol-4-yl)glycerol 3-phosphate = 3-(imidazol-4-yl)-2-oxopropyl phosphate + H2O</text>
        <dbReference type="Rhea" id="RHEA:11040"/>
        <dbReference type="ChEBI" id="CHEBI:15377"/>
        <dbReference type="ChEBI" id="CHEBI:57766"/>
        <dbReference type="ChEBI" id="CHEBI:58278"/>
        <dbReference type="EC" id="4.2.1.19"/>
    </reaction>
</comment>
<comment type="pathway">
    <text evidence="1">Amino-acid biosynthesis; L-histidine biosynthesis; L-histidine from 5-phospho-alpha-D-ribose 1-diphosphate: step 6/9.</text>
</comment>
<comment type="subcellular location">
    <subcellularLocation>
        <location evidence="1">Cytoplasm</location>
    </subcellularLocation>
</comment>
<comment type="similarity">
    <text evidence="1">Belongs to the imidazoleglycerol-phosphate dehydratase family.</text>
</comment>
<organism>
    <name type="scientific">Syntrophus aciditrophicus (strain SB)</name>
    <dbReference type="NCBI Taxonomy" id="56780"/>
    <lineage>
        <taxon>Bacteria</taxon>
        <taxon>Pseudomonadati</taxon>
        <taxon>Thermodesulfobacteriota</taxon>
        <taxon>Syntrophia</taxon>
        <taxon>Syntrophales</taxon>
        <taxon>Syntrophaceae</taxon>
        <taxon>Syntrophus</taxon>
    </lineage>
</organism>
<keyword id="KW-0028">Amino-acid biosynthesis</keyword>
<keyword id="KW-0963">Cytoplasm</keyword>
<keyword id="KW-0368">Histidine biosynthesis</keyword>
<keyword id="KW-0456">Lyase</keyword>
<keyword id="KW-1185">Reference proteome</keyword>
<proteinExistence type="inferred from homology"/>
<accession>Q2LVF5</accession>
<dbReference type="EC" id="4.2.1.19" evidence="1"/>
<dbReference type="EMBL" id="CP000252">
    <property type="protein sequence ID" value="ABC78065.1"/>
    <property type="molecule type" value="Genomic_DNA"/>
</dbReference>
<dbReference type="SMR" id="Q2LVF5"/>
<dbReference type="FunCoup" id="Q2LVF5">
    <property type="interactions" value="345"/>
</dbReference>
<dbReference type="STRING" id="56780.SYN_03108"/>
<dbReference type="KEGG" id="sat:SYN_03108"/>
<dbReference type="eggNOG" id="COG0131">
    <property type="taxonomic scope" value="Bacteria"/>
</dbReference>
<dbReference type="HOGENOM" id="CLU_044308_3_0_7"/>
<dbReference type="InParanoid" id="Q2LVF5"/>
<dbReference type="OrthoDB" id="9790411at2"/>
<dbReference type="UniPathway" id="UPA00031">
    <property type="reaction ID" value="UER00011"/>
</dbReference>
<dbReference type="Proteomes" id="UP000001933">
    <property type="component" value="Chromosome"/>
</dbReference>
<dbReference type="GO" id="GO:0005737">
    <property type="term" value="C:cytoplasm"/>
    <property type="evidence" value="ECO:0007669"/>
    <property type="project" value="UniProtKB-SubCell"/>
</dbReference>
<dbReference type="GO" id="GO:0004424">
    <property type="term" value="F:imidazoleglycerol-phosphate dehydratase activity"/>
    <property type="evidence" value="ECO:0007669"/>
    <property type="project" value="UniProtKB-UniRule"/>
</dbReference>
<dbReference type="GO" id="GO:0000105">
    <property type="term" value="P:L-histidine biosynthetic process"/>
    <property type="evidence" value="ECO:0007669"/>
    <property type="project" value="UniProtKB-UniRule"/>
</dbReference>
<dbReference type="CDD" id="cd07914">
    <property type="entry name" value="IGPD"/>
    <property type="match status" value="1"/>
</dbReference>
<dbReference type="FunFam" id="3.30.230.40:FF:000001">
    <property type="entry name" value="Imidazoleglycerol-phosphate dehydratase HisB"/>
    <property type="match status" value="1"/>
</dbReference>
<dbReference type="FunFam" id="3.30.230.40:FF:000003">
    <property type="entry name" value="Imidazoleglycerol-phosphate dehydratase HisB"/>
    <property type="match status" value="1"/>
</dbReference>
<dbReference type="Gene3D" id="3.30.230.40">
    <property type="entry name" value="Imidazole glycerol phosphate dehydratase, domain 1"/>
    <property type="match status" value="2"/>
</dbReference>
<dbReference type="HAMAP" id="MF_00076">
    <property type="entry name" value="HisB"/>
    <property type="match status" value="1"/>
</dbReference>
<dbReference type="InterPro" id="IPR038494">
    <property type="entry name" value="IGPD_sf"/>
</dbReference>
<dbReference type="InterPro" id="IPR000807">
    <property type="entry name" value="ImidazoleglycerolP_deHydtase"/>
</dbReference>
<dbReference type="InterPro" id="IPR020565">
    <property type="entry name" value="ImidazoleglycerP_deHydtase_CS"/>
</dbReference>
<dbReference type="InterPro" id="IPR020568">
    <property type="entry name" value="Ribosomal_Su5_D2-typ_SF"/>
</dbReference>
<dbReference type="NCBIfam" id="NF002111">
    <property type="entry name" value="PRK00951.2-1"/>
    <property type="match status" value="1"/>
</dbReference>
<dbReference type="NCBIfam" id="NF002114">
    <property type="entry name" value="PRK00951.2-4"/>
    <property type="match status" value="1"/>
</dbReference>
<dbReference type="PANTHER" id="PTHR23133:SF2">
    <property type="entry name" value="IMIDAZOLEGLYCEROL-PHOSPHATE DEHYDRATASE"/>
    <property type="match status" value="1"/>
</dbReference>
<dbReference type="PANTHER" id="PTHR23133">
    <property type="entry name" value="IMIDAZOLEGLYCEROL-PHOSPHATE DEHYDRATASE HIS7"/>
    <property type="match status" value="1"/>
</dbReference>
<dbReference type="Pfam" id="PF00475">
    <property type="entry name" value="IGPD"/>
    <property type="match status" value="1"/>
</dbReference>
<dbReference type="SUPFAM" id="SSF54211">
    <property type="entry name" value="Ribosomal protein S5 domain 2-like"/>
    <property type="match status" value="2"/>
</dbReference>
<dbReference type="PROSITE" id="PS00954">
    <property type="entry name" value="IGP_DEHYDRATASE_1"/>
    <property type="match status" value="1"/>
</dbReference>
<dbReference type="PROSITE" id="PS00955">
    <property type="entry name" value="IGP_DEHYDRATASE_2"/>
    <property type="match status" value="1"/>
</dbReference>
<protein>
    <recommendedName>
        <fullName evidence="1">Imidazoleglycerol-phosphate dehydratase</fullName>
        <shortName evidence="1">IGPD</shortName>
        <ecNumber evidence="1">4.2.1.19</ecNumber>
    </recommendedName>
</protein>
<sequence>MIMRQASVQRSTSETDISVEIDLDGGGQAVVETSIPFFDHMLTLFSRHGLFNLTVKGRGDTEIDDHHLVEDMGICLGKVVKDAMGDKTGMVRYGSATIPMDETLCAVTLDVSGRPYLVYHVAFSAGARAGEFDLQLIREFFKAFSDHSGITLHINLFYGENNHHIAEAVFKAFARALSMAVSIDSRIQGVLSTKGCL</sequence>
<evidence type="ECO:0000255" key="1">
    <source>
        <dbReference type="HAMAP-Rule" id="MF_00076"/>
    </source>
</evidence>
<gene>
    <name evidence="1" type="primary">hisB</name>
    <name type="ordered locus">SYNAS_21850</name>
    <name type="ORF">SYN_03108</name>
</gene>
<feature type="chain" id="PRO_0000336354" description="Imidazoleglycerol-phosphate dehydratase">
    <location>
        <begin position="1"/>
        <end position="197"/>
    </location>
</feature>
<name>HIS7_SYNAS</name>
<reference key="1">
    <citation type="journal article" date="2007" name="Proc. Natl. Acad. Sci. U.S.A.">
        <title>The genome of Syntrophus aciditrophicus: life at the thermodynamic limit of microbial growth.</title>
        <authorList>
            <person name="McInerney M.J."/>
            <person name="Rohlin L."/>
            <person name="Mouttaki H."/>
            <person name="Kim U."/>
            <person name="Krupp R.S."/>
            <person name="Rios-Hernandez L."/>
            <person name="Sieber J."/>
            <person name="Struchtemeyer C.G."/>
            <person name="Bhattacharyya A."/>
            <person name="Campbell J.W."/>
            <person name="Gunsalus R.P."/>
        </authorList>
    </citation>
    <scope>NUCLEOTIDE SEQUENCE [LARGE SCALE GENOMIC DNA]</scope>
    <source>
        <strain>SB</strain>
    </source>
</reference>